<name>RL24_METLZ</name>
<proteinExistence type="inferred from homology"/>
<reference key="1">
    <citation type="journal article" date="2009" name="Stand. Genomic Sci.">
        <title>Complete genome sequence of Methanocorpusculum labreanum type strain Z.</title>
        <authorList>
            <person name="Anderson I.J."/>
            <person name="Sieprawska-Lupa M."/>
            <person name="Goltsman E."/>
            <person name="Lapidus A."/>
            <person name="Copeland A."/>
            <person name="Glavina Del Rio T."/>
            <person name="Tice H."/>
            <person name="Dalin E."/>
            <person name="Barry K."/>
            <person name="Pitluck S."/>
            <person name="Hauser L."/>
            <person name="Land M."/>
            <person name="Lucas S."/>
            <person name="Richardson P."/>
            <person name="Whitman W.B."/>
            <person name="Kyrpides N.C."/>
        </authorList>
    </citation>
    <scope>NUCLEOTIDE SEQUENCE [LARGE SCALE GENOMIC DNA]</scope>
    <source>
        <strain>ATCC 43576 / DSM 4855 / Z</strain>
    </source>
</reference>
<sequence length="121" mass="13555">MARISSTQPRKQRKFRYNAPIHTRGAFLHSPLASDLREKYGKRSFRVVTGDTVKVLRGEFKGIEGVVDGVDVKNTKVLVHGVYVKKANGEDVPRPLDPSKIMITKLNTKDAVRVARLEVKA</sequence>
<keyword id="KW-1185">Reference proteome</keyword>
<keyword id="KW-0687">Ribonucleoprotein</keyword>
<keyword id="KW-0689">Ribosomal protein</keyword>
<keyword id="KW-0694">RNA-binding</keyword>
<keyword id="KW-0699">rRNA-binding</keyword>
<accession>A2SPL3</accession>
<dbReference type="EMBL" id="CP000559">
    <property type="protein sequence ID" value="ABN06269.1"/>
    <property type="molecule type" value="Genomic_DNA"/>
</dbReference>
<dbReference type="RefSeq" id="WP_011832470.1">
    <property type="nucleotide sequence ID" value="NC_008942.1"/>
</dbReference>
<dbReference type="SMR" id="A2SPL3"/>
<dbReference type="STRING" id="410358.Mlab_0092"/>
<dbReference type="GeneID" id="4795924"/>
<dbReference type="KEGG" id="mla:Mlab_0092"/>
<dbReference type="eggNOG" id="arCOG04094">
    <property type="taxonomic scope" value="Archaea"/>
</dbReference>
<dbReference type="HOGENOM" id="CLU_093240_2_1_2"/>
<dbReference type="OrthoDB" id="10899at2157"/>
<dbReference type="Proteomes" id="UP000000365">
    <property type="component" value="Chromosome"/>
</dbReference>
<dbReference type="GO" id="GO:0015934">
    <property type="term" value="C:large ribosomal subunit"/>
    <property type="evidence" value="ECO:0007669"/>
    <property type="project" value="InterPro"/>
</dbReference>
<dbReference type="GO" id="GO:0019843">
    <property type="term" value="F:rRNA binding"/>
    <property type="evidence" value="ECO:0007669"/>
    <property type="project" value="UniProtKB-UniRule"/>
</dbReference>
<dbReference type="GO" id="GO:0003735">
    <property type="term" value="F:structural constituent of ribosome"/>
    <property type="evidence" value="ECO:0007669"/>
    <property type="project" value="InterPro"/>
</dbReference>
<dbReference type="GO" id="GO:0006412">
    <property type="term" value="P:translation"/>
    <property type="evidence" value="ECO:0007669"/>
    <property type="project" value="UniProtKB-UniRule"/>
</dbReference>
<dbReference type="CDD" id="cd06089">
    <property type="entry name" value="KOW_RPL26"/>
    <property type="match status" value="1"/>
</dbReference>
<dbReference type="Gene3D" id="2.30.30.30">
    <property type="match status" value="1"/>
</dbReference>
<dbReference type="HAMAP" id="MF_01326_A">
    <property type="entry name" value="Ribosomal_uL24_A"/>
    <property type="match status" value="1"/>
</dbReference>
<dbReference type="InterPro" id="IPR005824">
    <property type="entry name" value="KOW"/>
</dbReference>
<dbReference type="InterPro" id="IPR014722">
    <property type="entry name" value="Rib_uL2_dom2"/>
</dbReference>
<dbReference type="InterPro" id="IPR005825">
    <property type="entry name" value="Ribosomal_uL24_CS"/>
</dbReference>
<dbReference type="InterPro" id="IPR005756">
    <property type="entry name" value="Ribosomal_uL24_euk/arc"/>
</dbReference>
<dbReference type="InterPro" id="IPR041988">
    <property type="entry name" value="Ribosomal_uL24_KOW"/>
</dbReference>
<dbReference type="InterPro" id="IPR008991">
    <property type="entry name" value="Translation_prot_SH3-like_sf"/>
</dbReference>
<dbReference type="NCBIfam" id="TIGR01080">
    <property type="entry name" value="rplX_A_E"/>
    <property type="match status" value="1"/>
</dbReference>
<dbReference type="PANTHER" id="PTHR11143">
    <property type="entry name" value="60S RIBOSOMAL PROTEIN L26 FAMILY MEMBER"/>
    <property type="match status" value="1"/>
</dbReference>
<dbReference type="Pfam" id="PF00467">
    <property type="entry name" value="KOW"/>
    <property type="match status" value="1"/>
</dbReference>
<dbReference type="Pfam" id="PF16906">
    <property type="entry name" value="Ribosomal_L26"/>
    <property type="match status" value="1"/>
</dbReference>
<dbReference type="SUPFAM" id="SSF50104">
    <property type="entry name" value="Translation proteins SH3-like domain"/>
    <property type="match status" value="1"/>
</dbReference>
<dbReference type="PROSITE" id="PS01108">
    <property type="entry name" value="RIBOSOMAL_L24"/>
    <property type="match status" value="1"/>
</dbReference>
<comment type="function">
    <text evidence="1">One of two assembly initiator proteins, it binds directly to the 5'-end of the 23S rRNA, where it nucleates assembly of the 50S subunit.</text>
</comment>
<comment type="function">
    <text evidence="1">Located at the polypeptide exit tunnel on the outside of the subunit.</text>
</comment>
<comment type="subunit">
    <text evidence="1">Part of the 50S ribosomal subunit.</text>
</comment>
<comment type="similarity">
    <text evidence="1">Belongs to the universal ribosomal protein uL24 family.</text>
</comment>
<protein>
    <recommendedName>
        <fullName evidence="1">Large ribosomal subunit protein uL24</fullName>
    </recommendedName>
    <alternativeName>
        <fullName evidence="2">50S ribosomal protein L24</fullName>
    </alternativeName>
</protein>
<evidence type="ECO:0000255" key="1">
    <source>
        <dbReference type="HAMAP-Rule" id="MF_01326"/>
    </source>
</evidence>
<evidence type="ECO:0000305" key="2"/>
<feature type="chain" id="PRO_1000052250" description="Large ribosomal subunit protein uL24">
    <location>
        <begin position="1"/>
        <end position="121"/>
    </location>
</feature>
<organism>
    <name type="scientific">Methanocorpusculum labreanum (strain ATCC 43576 / DSM 4855 / Z)</name>
    <dbReference type="NCBI Taxonomy" id="410358"/>
    <lineage>
        <taxon>Archaea</taxon>
        <taxon>Methanobacteriati</taxon>
        <taxon>Methanobacteriota</taxon>
        <taxon>Stenosarchaea group</taxon>
        <taxon>Methanomicrobia</taxon>
        <taxon>Methanomicrobiales</taxon>
        <taxon>Methanocorpusculaceae</taxon>
        <taxon>Methanocorpusculum</taxon>
    </lineage>
</organism>
<gene>
    <name evidence="1" type="primary">rpl24</name>
    <name type="ordered locus">Mlab_0092</name>
</gene>